<proteinExistence type="inferred from homology"/>
<sequence length="868" mass="96698">MSGRDNRGAGGGGGGHQPLSSAMGKLKEKLTRAGDDQGYHRVESNLSTSNTATSLDTILPEDPFLFPQAAPQRHPLPRPQQQQQQQRQQLRLLEDEPPLSFRPLLEDDDINEPPTQPFQQQQQRTPLRASGSLELTPLPPPPTSQEIREHRDRQQRSVPVPVEDLQRSKQSLKGSRVSFEKNNASSKPPAQAESSDEDSFEDKRIGFQQQKATSVDHKGILKDLKHILANDNRRQFQAKKHVSLDVKGTRFLQDLLKESSSEEEFHKTRREFQGRKHQSLDPRVTFKLDKVLQGSSTDSDEEGDDPEHKRLIHRPKDITKPLIIDLKDLESESDEDFHTSRQHFQQQRSISTDSRKSRRPYEMDEMGNKRGENIRHAVPFVRQITEDGKPKLEVYRPTTNPIYIWTQVLAALSVSLGSLVVGFVSAYTSPALVSMTNRNMTSFEVTPQAASWVGGIMPLAGLAGGIAGGPFIEYLGRRNTILATAIPFIVSSLLIACAVNVAMVLAGRFLAGFCVGIASLSLPVYLGETVQPEVRGTLGLLPTAFGNIGILLCFVAGTYMDWSMLAFLGAALPVPFLILMFLIPETPRWFVSRGREEKARKALSWLRGKEADVEPELKGLMRSQADADRQATQNKMMELLKRNNLKPLSISLGLMFFQQLSGINAVIFYTVSIFKDAGSTIDGNLCTIIVGIVNFMATFIATLLIDRAGRKILLYVSNIAMIITLFVLGGFFYCKSHGQDVSQLGWLPLSCFVIYILGFSLGFGPIPWLMMGEILPSKIRGSAASVATAFNWSCTFVVTKTFQDMIDFMGAHGAFWLFGSICFIGLFFVILYVPETQGKTLEDIERKMMGRVRRMSSVANMKPLAFNM</sequence>
<comment type="function">
    <text evidence="1">Low-capacity facilitative transporter for trehalose. Does not transport maltose, sucrose or lactose. Mediates the bidirectional transfer of trehalose. Responsible for the transport of trehalose synthesized in the fat body and the incorporation of trehalose into other tissues that require a carbon source, thereby regulating trehalose levels in the hemolymph (By similarity).</text>
</comment>
<comment type="subcellular location">
    <subcellularLocation>
        <location evidence="1">Cell membrane</location>
        <topology evidence="1">Multi-pass membrane protein</topology>
    </subcellularLocation>
</comment>
<comment type="similarity">
    <text evidence="1 2">Belongs to the major facilitator superfamily. Sugar transporter (TC 2.A.1.1) family. Trehalose transporter subfamily.</text>
</comment>
<comment type="sequence caution" evidence="4">
    <conflict type="erroneous gene model prediction">
        <sequence resource="EMBL-CDS" id="EAL25134"/>
    </conflict>
</comment>
<dbReference type="EMBL" id="CM000071">
    <property type="protein sequence ID" value="EAL25134.2"/>
    <property type="status" value="ALT_SEQ"/>
    <property type="molecule type" value="Genomic_DNA"/>
</dbReference>
<dbReference type="RefSeq" id="XP_001360559.3">
    <property type="nucleotide sequence ID" value="XM_001360522.3"/>
</dbReference>
<dbReference type="SMR" id="Q291H8"/>
<dbReference type="FunCoup" id="Q291H8">
    <property type="interactions" value="174"/>
</dbReference>
<dbReference type="STRING" id="46245.Q291H8"/>
<dbReference type="GlyCosmos" id="Q291H8">
    <property type="glycosylation" value="1 site, No reported glycans"/>
</dbReference>
<dbReference type="EnsemblMetazoa" id="FBtr0370198">
    <property type="protein sequence ID" value="FBpp0332626"/>
    <property type="gene ID" value="FBgn0075610"/>
</dbReference>
<dbReference type="KEGG" id="dpo:4803914"/>
<dbReference type="CTD" id="36248"/>
<dbReference type="eggNOG" id="KOG0254">
    <property type="taxonomic scope" value="Eukaryota"/>
</dbReference>
<dbReference type="InParanoid" id="Q291H8"/>
<dbReference type="Proteomes" id="UP000001819">
    <property type="component" value="Chromosome 3"/>
</dbReference>
<dbReference type="Bgee" id="FBgn0075610">
    <property type="expression patterns" value="Expressed in insect adult head and 2 other cell types or tissues"/>
</dbReference>
<dbReference type="ExpressionAtlas" id="Q291H8">
    <property type="expression patterns" value="baseline"/>
</dbReference>
<dbReference type="GO" id="GO:0005886">
    <property type="term" value="C:plasma membrane"/>
    <property type="evidence" value="ECO:0000250"/>
    <property type="project" value="UniProtKB"/>
</dbReference>
<dbReference type="GO" id="GO:0051119">
    <property type="term" value="F:sugar transmembrane transporter activity"/>
    <property type="evidence" value="ECO:0007669"/>
    <property type="project" value="InterPro"/>
</dbReference>
<dbReference type="GO" id="GO:0015574">
    <property type="term" value="F:trehalose transmembrane transporter activity"/>
    <property type="evidence" value="ECO:0000250"/>
    <property type="project" value="UniProtKB"/>
</dbReference>
<dbReference type="GO" id="GO:0015771">
    <property type="term" value="P:trehalose transport"/>
    <property type="evidence" value="ECO:0000250"/>
    <property type="project" value="UniProtKB"/>
</dbReference>
<dbReference type="CDD" id="cd17358">
    <property type="entry name" value="MFS_GLUT6_8_Class3_like"/>
    <property type="match status" value="1"/>
</dbReference>
<dbReference type="FunFam" id="1.20.1250.20:FF:000055">
    <property type="entry name" value="Facilitated trehalose transporter Tret1-2 homolog"/>
    <property type="match status" value="1"/>
</dbReference>
<dbReference type="Gene3D" id="1.20.1250.20">
    <property type="entry name" value="MFS general substrate transporter like domains"/>
    <property type="match status" value="1"/>
</dbReference>
<dbReference type="InterPro" id="IPR020846">
    <property type="entry name" value="MFS_dom"/>
</dbReference>
<dbReference type="InterPro" id="IPR044775">
    <property type="entry name" value="MFS_ERD6/Tret1-like"/>
</dbReference>
<dbReference type="InterPro" id="IPR005828">
    <property type="entry name" value="MFS_sugar_transport-like"/>
</dbReference>
<dbReference type="InterPro" id="IPR036259">
    <property type="entry name" value="MFS_trans_sf"/>
</dbReference>
<dbReference type="InterPro" id="IPR050549">
    <property type="entry name" value="MFS_Trehalose_Transporter"/>
</dbReference>
<dbReference type="InterPro" id="IPR003663">
    <property type="entry name" value="Sugar/inositol_transpt"/>
</dbReference>
<dbReference type="InterPro" id="IPR005829">
    <property type="entry name" value="Sugar_transporter_CS"/>
</dbReference>
<dbReference type="NCBIfam" id="TIGR00879">
    <property type="entry name" value="SP"/>
    <property type="match status" value="1"/>
</dbReference>
<dbReference type="PANTHER" id="PTHR48021">
    <property type="match status" value="1"/>
</dbReference>
<dbReference type="PANTHER" id="PTHR48021:SF96">
    <property type="entry name" value="FACILITATED TREHALOSE TRANSPORTER TRET1-1-RELATED"/>
    <property type="match status" value="1"/>
</dbReference>
<dbReference type="Pfam" id="PF00083">
    <property type="entry name" value="Sugar_tr"/>
    <property type="match status" value="1"/>
</dbReference>
<dbReference type="PRINTS" id="PR00171">
    <property type="entry name" value="SUGRTRNSPORT"/>
</dbReference>
<dbReference type="SUPFAM" id="SSF103473">
    <property type="entry name" value="MFS general substrate transporter"/>
    <property type="match status" value="1"/>
</dbReference>
<dbReference type="PROSITE" id="PS50850">
    <property type="entry name" value="MFS"/>
    <property type="match status" value="1"/>
</dbReference>
<dbReference type="PROSITE" id="PS00216">
    <property type="entry name" value="SUGAR_TRANSPORT_1"/>
    <property type="match status" value="1"/>
</dbReference>
<dbReference type="PROSITE" id="PS00217">
    <property type="entry name" value="SUGAR_TRANSPORT_2"/>
    <property type="match status" value="1"/>
</dbReference>
<evidence type="ECO:0000250" key="1">
    <source>
        <dbReference type="UniProtKB" id="A1Z8N1"/>
    </source>
</evidence>
<evidence type="ECO:0000255" key="2"/>
<evidence type="ECO:0000256" key="3">
    <source>
        <dbReference type="SAM" id="MobiDB-lite"/>
    </source>
</evidence>
<evidence type="ECO:0000305" key="4"/>
<evidence type="ECO:0000312" key="5">
    <source>
        <dbReference type="EMBL" id="EAL25134.2"/>
    </source>
</evidence>
<gene>
    <name evidence="1" type="primary">Tret1</name>
    <name type="ORF">GA15593</name>
</gene>
<accession>Q291H8</accession>
<organism>
    <name type="scientific">Drosophila pseudoobscura pseudoobscura</name>
    <name type="common">Fruit fly</name>
    <dbReference type="NCBI Taxonomy" id="46245"/>
    <lineage>
        <taxon>Eukaryota</taxon>
        <taxon>Metazoa</taxon>
        <taxon>Ecdysozoa</taxon>
        <taxon>Arthropoda</taxon>
        <taxon>Hexapoda</taxon>
        <taxon>Insecta</taxon>
        <taxon>Pterygota</taxon>
        <taxon>Neoptera</taxon>
        <taxon>Endopterygota</taxon>
        <taxon>Diptera</taxon>
        <taxon>Brachycera</taxon>
        <taxon>Muscomorpha</taxon>
        <taxon>Ephydroidea</taxon>
        <taxon>Drosophilidae</taxon>
        <taxon>Drosophila</taxon>
        <taxon>Sophophora</taxon>
    </lineage>
</organism>
<reference evidence="5" key="1">
    <citation type="journal article" date="2005" name="Genome Res.">
        <title>Comparative genome sequencing of Drosophila pseudoobscura: chromosomal, gene, and cis-element evolution.</title>
        <authorList>
            <person name="Richards S."/>
            <person name="Liu Y."/>
            <person name="Bettencourt B.R."/>
            <person name="Hradecky P."/>
            <person name="Letovsky S."/>
            <person name="Nielsen R."/>
            <person name="Thornton K."/>
            <person name="Hubisz M.J."/>
            <person name="Chen R."/>
            <person name="Meisel R.P."/>
            <person name="Couronne O."/>
            <person name="Hua S."/>
            <person name="Smith M.A."/>
            <person name="Zhang P."/>
            <person name="Liu J."/>
            <person name="Bussemaker H.J."/>
            <person name="van Batenburg M.F."/>
            <person name="Howells S.L."/>
            <person name="Scherer S.E."/>
            <person name="Sodergren E."/>
            <person name="Matthews B.B."/>
            <person name="Crosby M.A."/>
            <person name="Schroeder A.J."/>
            <person name="Ortiz-Barrientos D."/>
            <person name="Rives C.M."/>
            <person name="Metzker M.L."/>
            <person name="Muzny D.M."/>
            <person name="Scott G."/>
            <person name="Steffen D."/>
            <person name="Wheeler D.A."/>
            <person name="Worley K.C."/>
            <person name="Havlak P."/>
            <person name="Durbin K.J."/>
            <person name="Egan A."/>
            <person name="Gill R."/>
            <person name="Hume J."/>
            <person name="Morgan M.B."/>
            <person name="Miner G."/>
            <person name="Hamilton C."/>
            <person name="Huang Y."/>
            <person name="Waldron L."/>
            <person name="Verduzco D."/>
            <person name="Clerc-Blankenburg K.P."/>
            <person name="Dubchak I."/>
            <person name="Noor M.A.F."/>
            <person name="Anderson W."/>
            <person name="White K.P."/>
            <person name="Clark A.G."/>
            <person name="Schaeffer S.W."/>
            <person name="Gelbart W.M."/>
            <person name="Weinstock G.M."/>
            <person name="Gibbs R.A."/>
        </authorList>
    </citation>
    <scope>NUCLEOTIDE SEQUENCE [LARGE SCALE GENOMIC DNA]</scope>
    <source>
        <strain>MV2-25 / Tucson 14011-0121.94</strain>
    </source>
</reference>
<feature type="chain" id="PRO_0000395547" description="Facilitated trehalose transporter Tret1">
    <location>
        <begin position="1"/>
        <end position="868"/>
    </location>
</feature>
<feature type="topological domain" description="Cytoplasmic" evidence="2">
    <location>
        <begin position="1"/>
        <end position="403"/>
    </location>
</feature>
<feature type="transmembrane region" description="Helical; Name=1" evidence="2">
    <location>
        <begin position="404"/>
        <end position="424"/>
    </location>
</feature>
<feature type="topological domain" description="Extracellular" evidence="2">
    <location>
        <begin position="425"/>
        <end position="451"/>
    </location>
</feature>
<feature type="transmembrane region" description="Helical; Name=2" evidence="2">
    <location>
        <begin position="452"/>
        <end position="472"/>
    </location>
</feature>
<feature type="topological domain" description="Cytoplasmic" evidence="2">
    <location>
        <begin position="473"/>
        <end position="484"/>
    </location>
</feature>
<feature type="transmembrane region" description="Helical; Name=3" evidence="2">
    <location>
        <begin position="485"/>
        <end position="505"/>
    </location>
</feature>
<feature type="topological domain" description="Extracellular" evidence="2">
    <location>
        <begin position="506"/>
        <end position="508"/>
    </location>
</feature>
<feature type="transmembrane region" description="Helical; Name=4" evidence="2">
    <location>
        <begin position="509"/>
        <end position="529"/>
    </location>
</feature>
<feature type="topological domain" description="Cytoplasmic" evidence="2">
    <location>
        <begin position="530"/>
        <end position="535"/>
    </location>
</feature>
<feature type="transmembrane region" description="Helical; Name=5" evidence="2">
    <location>
        <begin position="536"/>
        <end position="556"/>
    </location>
</feature>
<feature type="topological domain" description="Extracellular" evidence="2">
    <location>
        <begin position="557"/>
        <end position="563"/>
    </location>
</feature>
<feature type="transmembrane region" description="Helical; Name=6" evidence="2">
    <location>
        <begin position="564"/>
        <end position="584"/>
    </location>
</feature>
<feature type="topological domain" description="Cytoplasmic" evidence="2">
    <location>
        <begin position="585"/>
        <end position="653"/>
    </location>
</feature>
<feature type="transmembrane region" description="Helical; Name=7" evidence="2">
    <location>
        <begin position="654"/>
        <end position="674"/>
    </location>
</feature>
<feature type="topological domain" description="Extracellular" evidence="2">
    <location>
        <begin position="675"/>
        <end position="684"/>
    </location>
</feature>
<feature type="transmembrane region" description="Helical; Name=8" evidence="2">
    <location>
        <begin position="685"/>
        <end position="705"/>
    </location>
</feature>
<feature type="topological domain" description="Cytoplasmic" evidence="2">
    <location>
        <begin position="706"/>
        <end position="711"/>
    </location>
</feature>
<feature type="transmembrane region" description="Helical; Name=9" evidence="2">
    <location>
        <begin position="712"/>
        <end position="732"/>
    </location>
</feature>
<feature type="topological domain" description="Extracellular" evidence="2">
    <location>
        <begin position="733"/>
        <end position="751"/>
    </location>
</feature>
<feature type="transmembrane region" description="Helical; Name=10" evidence="2">
    <location>
        <begin position="752"/>
        <end position="772"/>
    </location>
</feature>
<feature type="topological domain" description="Cytoplasmic" evidence="2">
    <location>
        <begin position="773"/>
        <end position="778"/>
    </location>
</feature>
<feature type="transmembrane region" description="Helical; Name=11" evidence="2">
    <location>
        <begin position="779"/>
        <end position="799"/>
    </location>
</feature>
<feature type="topological domain" description="Extracellular" evidence="2">
    <location>
        <begin position="800"/>
        <end position="812"/>
    </location>
</feature>
<feature type="transmembrane region" description="Helical; Name=12" evidence="2">
    <location>
        <begin position="813"/>
        <end position="833"/>
    </location>
</feature>
<feature type="topological domain" description="Cytoplasmic" evidence="2">
    <location>
        <begin position="834"/>
        <end position="868"/>
    </location>
</feature>
<feature type="region of interest" description="Disordered" evidence="3">
    <location>
        <begin position="1"/>
        <end position="213"/>
    </location>
</feature>
<feature type="region of interest" description="Disordered" evidence="3">
    <location>
        <begin position="257"/>
        <end position="314"/>
    </location>
</feature>
<feature type="region of interest" description="Disordered" evidence="3">
    <location>
        <begin position="335"/>
        <end position="367"/>
    </location>
</feature>
<feature type="compositionally biased region" description="Basic and acidic residues" evidence="3">
    <location>
        <begin position="25"/>
        <end position="43"/>
    </location>
</feature>
<feature type="compositionally biased region" description="Low complexity" evidence="3">
    <location>
        <begin position="44"/>
        <end position="57"/>
    </location>
</feature>
<feature type="compositionally biased region" description="Low complexity" evidence="3">
    <location>
        <begin position="79"/>
        <end position="91"/>
    </location>
</feature>
<feature type="compositionally biased region" description="Low complexity" evidence="3">
    <location>
        <begin position="117"/>
        <end position="126"/>
    </location>
</feature>
<feature type="compositionally biased region" description="Basic and acidic residues" evidence="3">
    <location>
        <begin position="146"/>
        <end position="155"/>
    </location>
</feature>
<feature type="compositionally biased region" description="Basic and acidic residues" evidence="3">
    <location>
        <begin position="257"/>
        <end position="290"/>
    </location>
</feature>
<feature type="compositionally biased region" description="Polar residues" evidence="3">
    <location>
        <begin position="342"/>
        <end position="352"/>
    </location>
</feature>
<feature type="compositionally biased region" description="Basic and acidic residues" evidence="3">
    <location>
        <begin position="353"/>
        <end position="367"/>
    </location>
</feature>
<feature type="modified residue" description="Phosphoserine" evidence="1">
    <location>
        <position position="259"/>
    </location>
</feature>
<feature type="modified residue" description="Phosphoserine" evidence="1">
    <location>
        <position position="260"/>
    </location>
</feature>
<feature type="modified residue" description="Phosphoserine" evidence="1">
    <location>
        <position position="261"/>
    </location>
</feature>
<feature type="modified residue" description="Phosphoserine" evidence="1">
    <location>
        <position position="331"/>
    </location>
</feature>
<feature type="modified residue" description="Phosphoserine" evidence="1">
    <location>
        <position position="333"/>
    </location>
</feature>
<feature type="modified residue" description="Phosphoserine" evidence="1">
    <location>
        <position position="856"/>
    </location>
</feature>
<feature type="modified residue" description="Phosphoserine" evidence="1">
    <location>
        <position position="857"/>
    </location>
</feature>
<feature type="glycosylation site" description="N-linked (GlcNAc...) asparagine" evidence="2">
    <location>
        <position position="439"/>
    </location>
</feature>
<name>TRET1_DROPS</name>
<protein>
    <recommendedName>
        <fullName evidence="1">Facilitated trehalose transporter Tret1</fullName>
    </recommendedName>
</protein>
<keyword id="KW-1003">Cell membrane</keyword>
<keyword id="KW-0325">Glycoprotein</keyword>
<keyword id="KW-0472">Membrane</keyword>
<keyword id="KW-0597">Phosphoprotein</keyword>
<keyword id="KW-1185">Reference proteome</keyword>
<keyword id="KW-0762">Sugar transport</keyword>
<keyword id="KW-0812">Transmembrane</keyword>
<keyword id="KW-1133">Transmembrane helix</keyword>
<keyword id="KW-0813">Transport</keyword>